<protein>
    <recommendedName>
        <fullName evidence="3">DNA/RNA-binding protein Alba 1</fullName>
    </recommendedName>
    <alternativeName>
        <fullName>Ssh10b</fullName>
        <ecNumber evidence="2">3.1.-.-</ecNumber>
    </alternativeName>
</protein>
<keyword id="KW-0002">3D-structure</keyword>
<keyword id="KW-0007">Acetylation</keyword>
<keyword id="KW-0143">Chaperone</keyword>
<keyword id="KW-0158">Chromosome</keyword>
<keyword id="KW-0963">Cytoplasm</keyword>
<keyword id="KW-0226">DNA condensation</keyword>
<keyword id="KW-0238">DNA-binding</keyword>
<keyword id="KW-0378">Hydrolase</keyword>
<keyword id="KW-0488">Methylation</keyword>
<keyword id="KW-0540">Nuclease</keyword>
<keyword id="KW-0694">RNA-binding</keyword>
<organism>
    <name type="scientific">Saccharolobus shibatae (strain ATCC 51178 / DSM 5389 / JCM 8931 / NBRC 15437 / B12)</name>
    <name type="common">Sulfolobus shibatae</name>
    <dbReference type="NCBI Taxonomy" id="523848"/>
    <lineage>
        <taxon>Archaea</taxon>
        <taxon>Thermoproteota</taxon>
        <taxon>Thermoprotei</taxon>
        <taxon>Sulfolobales</taxon>
        <taxon>Sulfolobaceae</taxon>
        <taxon>Saccharolobus</taxon>
    </lineage>
</organism>
<feature type="initiator methionine" description="Removed" evidence="2">
    <location>
        <position position="1"/>
    </location>
</feature>
<feature type="chain" id="PRO_0000151711" description="DNA/RNA-binding protein Alba 1">
    <location>
        <begin position="2"/>
        <end position="97"/>
    </location>
</feature>
<feature type="binding site" evidence="7 11">
    <location>
        <position position="16"/>
    </location>
    <ligand>
        <name>RNA</name>
        <dbReference type="ChEBI" id="CHEBI:33697"/>
    </ligand>
</feature>
<feature type="binding site" evidence="7 11">
    <location>
        <position position="17"/>
    </location>
    <ligand>
        <name>RNA</name>
        <dbReference type="ChEBI" id="CHEBI:33697"/>
    </ligand>
</feature>
<feature type="binding site" evidence="7 11">
    <location>
        <position position="22"/>
    </location>
    <ligand>
        <name>RNA</name>
        <dbReference type="ChEBI" id="CHEBI:33697"/>
    </ligand>
</feature>
<feature type="binding site" evidence="7 11">
    <location>
        <position position="42"/>
    </location>
    <ligand>
        <name>RNA</name>
        <dbReference type="ChEBI" id="CHEBI:33697"/>
    </ligand>
</feature>
<feature type="binding site" evidence="7 11">
    <location>
        <position position="44"/>
    </location>
    <ligand>
        <name>RNA</name>
        <dbReference type="ChEBI" id="CHEBI:33697"/>
    </ligand>
</feature>
<feature type="modified residue" description="N-acetylserine" evidence="2">
    <location>
        <position position="2"/>
    </location>
</feature>
<feature type="modified residue" description="N6-acetyllysine; alternate" evidence="2">
    <location>
        <position position="16"/>
    </location>
</feature>
<feature type="modified residue" description="N6-methylated lysine; alternate" evidence="1">
    <location>
        <position position="16"/>
    </location>
</feature>
<feature type="mutagenesis site" description="No effect on cis-trans isomerization of dimer." evidence="5">
    <original>P</original>
    <variation>A</variation>
    <location>
        <position position="8"/>
    </location>
</feature>
<feature type="mutagenesis site" description="Decreases binding affinity for RNA. Significantly decreases binding affinity for RNA; when associated with A-22 or A-44. Abolishes binding of RNA with no significant effects on oligomerization; when associated with A-22 and A-44." evidence="7">
    <original>K</original>
    <variation>A</variation>
    <location>
        <position position="16"/>
    </location>
</feature>
<feature type="mutagenesis site" description="No significant effects on binding affinity for RNA." evidence="7">
    <original>K</original>
    <variation>A</variation>
    <location>
        <position position="17"/>
    </location>
</feature>
<feature type="mutagenesis site" description="Reduces ability to form higher order oligomers with no significant effects on binding affinity for RNA; when associated with E-24 and E-27. No significant effects on binding affinity for RNA; when associated with E-24; E-27 and E-60." evidence="7">
    <original>M</original>
    <variation>E</variation>
    <location>
        <position position="20"/>
    </location>
</feature>
<feature type="mutagenesis site" description="Decreases binding affinity for RNA. Decreases binding affinity for RNA; when associated with A-44. Significantly decreases binding affinity for RNA; when associated with A-16. Abolishes binding of RNA with no significant effects on oligomerization; when associated with A-16 and A-44." evidence="7">
    <original>Y</original>
    <variation>A</variation>
    <location>
        <position position="22"/>
    </location>
</feature>
<feature type="mutagenesis site" description="Reduces ability to form higher order oligomers with no significant effects on binding affinity for RNA; when associated with E-20 and E-27. No significant effects on binding affinity for RNA; when associated with E-20; E-27 and E-60." evidence="7">
    <original>L</original>
    <variation>E</variation>
    <location>
        <position position="24"/>
    </location>
</feature>
<feature type="mutagenesis site" description="Reduces ability to form higher order oligomers with no significant effects on binding affinity for RNA; when associated with E-20 and E-24. No significant effects on binding affinity for RNA; when associated with E-20; E-24 and E-60." evidence="7">
    <original>L</original>
    <variation>E</variation>
    <location>
        <position position="27"/>
    </location>
</feature>
<feature type="mutagenesis site" description="Moderately decreases binding affinity for RNA." evidence="7">
    <original>R</original>
    <variation>A</variation>
    <location>
        <position position="42"/>
    </location>
</feature>
<feature type="mutagenesis site" description="Decreases binding affinity for RNA. Decreases binding affinity for RNA; when associated with A-16 or A-22. Abolishes binding of RNA with no significant effects on oligomerization; when associated with A-16 and A-22." evidence="7">
    <original>R</original>
    <variation>A</variation>
    <location>
        <position position="44"/>
    </location>
</feature>
<feature type="mutagenesis site" description="No significant effects on binding affinity for RNA and oligomerization. Reduces ability to form higher order oligomers with no significant effects on binding affinity for RNA; when associated with E-20; E-24 and E-27." evidence="7">
    <original>F</original>
    <variation>E</variation>
    <location>
        <position position="60"/>
    </location>
</feature>
<feature type="mutagenesis site" description="Loss of cis-trans isomerization of dimer." evidence="5">
    <original>P</original>
    <variation>A</variation>
    <location>
        <position position="62"/>
    </location>
</feature>
<feature type="strand" evidence="13">
    <location>
        <begin position="9"/>
        <end position="13"/>
    </location>
</feature>
<feature type="helix" evidence="13">
    <location>
        <begin position="19"/>
        <end position="31"/>
    </location>
</feature>
<feature type="strand" evidence="13">
    <location>
        <begin position="36"/>
        <end position="42"/>
    </location>
</feature>
<feature type="helix" evidence="13">
    <location>
        <begin position="45"/>
        <end position="59"/>
    </location>
</feature>
<feature type="turn" evidence="13">
    <location>
        <begin position="62"/>
        <end position="64"/>
    </location>
</feature>
<feature type="strand" evidence="13">
    <location>
        <begin position="65"/>
        <end position="76"/>
    </location>
</feature>
<feature type="strand" evidence="12">
    <location>
        <begin position="80"/>
        <end position="82"/>
    </location>
</feature>
<feature type="strand" evidence="13">
    <location>
        <begin position="86"/>
        <end position="96"/>
    </location>
</feature>
<comment type="function">
    <text evidence="1 2 4 6 7">Binds double-stranded DNA tightly but without sequence specificity (PubMed:10869069, PubMed:14651642). Involved in DNA compaction (By similarity). Possesses DNA endonuclease activity (By similarity). Prevents transcription after DNA binding (By similarity). Binds single-stranded DNA and RNA in vitro (PubMed:14651642). Binds rRNA and mRNA in vivo (PubMed:14651642). May play a role in maintaining the structural and functional stability of RNA, and, perhaps, ribosomes (PubMed:14651642). Binds double-stranded RNA (dsRNA) and exhibits RNA chaperone activity (PubMed:24307170). Required for the normal growth (By similarity).</text>
</comment>
<comment type="biophysicochemical properties">
    <temperatureDependence>
        <text evidence="4">Highly active above 45 degrees Celsius. Poorly active at 25 degrees Celsius.</text>
    </temperatureDependence>
</comment>
<comment type="subunit">
    <text evidence="4 5 7">Forms homodimers and higher order oligomers, e.g. homotetramers (PubMed:10869069, PubMed:14523014, PubMed:24307170). Two forms exist in solution due to isomerization of the Leu-61/Pro-62 peptide bond. The trans (T) form of the dimer dominates at higher temperatures, whereas the population of the cis (C) form increases at lower temperatures. The T form causes DNA to adopt a supercoiled conformation (PubMed:14523014). Homodimers assemble cooperatively on RNA with consecutive dimers binding end-to-end (PubMed:24307170).</text>
</comment>
<comment type="subcellular location">
    <subcellularLocation>
        <location evidence="3 6">Cytoplasm</location>
    </subcellularLocation>
    <subcellularLocation>
        <location evidence="3 6">Chromosome</location>
    </subcellularLocation>
</comment>
<comment type="developmental stage">
    <text evidence="6">The cellular level is constant during the growth cycle.</text>
</comment>
<comment type="PTM">
    <text evidence="1 2">Acetylated (By similarity). Acetylation by the Pat acetylase decreases DNA-binding affinity (By similarity). Deacetylation by the CobB deacetylase increases DNA-binding affinity (By similarity). Acetylation at Ser-2 is involved in the regulation of the turnover of the protein (By similarity).</text>
</comment>
<comment type="similarity">
    <text evidence="3 8">Belongs to the histone-like Alba family.</text>
</comment>
<evidence type="ECO:0000250" key="1">
    <source>
        <dbReference type="UniProtKB" id="F0NHH1"/>
    </source>
</evidence>
<evidence type="ECO:0000250" key="2">
    <source>
        <dbReference type="UniProtKB" id="P60849"/>
    </source>
</evidence>
<evidence type="ECO:0000255" key="3">
    <source>
        <dbReference type="HAMAP-Rule" id="MF_01122"/>
    </source>
</evidence>
<evidence type="ECO:0000269" key="4">
    <source>
    </source>
</evidence>
<evidence type="ECO:0000269" key="5">
    <source>
    </source>
</evidence>
<evidence type="ECO:0000269" key="6">
    <source>
    </source>
</evidence>
<evidence type="ECO:0000269" key="7">
    <source>
    </source>
</evidence>
<evidence type="ECO:0000305" key="8"/>
<evidence type="ECO:0000312" key="9">
    <source>
        <dbReference type="EMBL" id="QXJ29642.1"/>
    </source>
</evidence>
<evidence type="ECO:0000312" key="10">
    <source>
        <dbReference type="PDB" id="3WBM"/>
    </source>
</evidence>
<evidence type="ECO:0007744" key="11">
    <source>
        <dbReference type="PDB" id="3WBM"/>
    </source>
</evidence>
<evidence type="ECO:0007829" key="12">
    <source>
        <dbReference type="PDB" id="1Y9X"/>
    </source>
</evidence>
<evidence type="ECO:0007829" key="13">
    <source>
        <dbReference type="PDB" id="3WBM"/>
    </source>
</evidence>
<sequence>MSSGTPTPSNVVLIGKKPVMNYVLAALTLLNQGVSEIVIKARGRAISKAVDTVEIVRNRFLPDKIEIKEIRVGSQVVTSQDGRQSRVSTIEIAIRKK</sequence>
<reference key="1">
    <citation type="journal article" date="1996" name="Nucleic Acids Res.">
        <title>Reverse gyrase gene from Sulfolobus shibatae B12: gene structure, transcription unit and comparative sequence analysis of the two domains.</title>
        <authorList>
            <person name="Jaxel C."/>
            <person name="Bouthier de la Tour C."/>
            <person name="Duguet M."/>
            <person name="Nadal M."/>
        </authorList>
    </citation>
    <scope>NUCLEOTIDE SEQUENCE [GENOMIC DNA]</scope>
    <source>
        <strain>ATCC 51178 / DSM 5389 / JCM 8931 / NBRC 15437 / B12</strain>
    </source>
</reference>
<reference evidence="9" key="2">
    <citation type="journal article" date="2021" name="Environ. Microbiol.">
        <title>New insights into the diversity and evolution of the archaeal mobilome from three complete genomes of Saccharolobus shibatae.</title>
        <authorList>
            <person name="Medvedeva S."/>
            <person name="Brandt D."/>
            <person name="Cvirkaite-Krupovic V."/>
            <person name="Liu Y."/>
            <person name="Severinov K."/>
            <person name="Ishino S."/>
            <person name="Ishino Y."/>
            <person name="Prangishvili D."/>
            <person name="Kalinowski J."/>
            <person name="Krupovic M."/>
        </authorList>
    </citation>
    <scope>NUCLEOTIDE SEQUENCE [LARGE SCALE GENOMIC DNA]</scope>
    <source>
        <strain>ATCC 51178 / DSM 5389 / JCM 8931 / NBRC 15437 / B12</strain>
    </source>
</reference>
<reference key="3">
    <citation type="journal article" date="2000" name="J. Bacteriol.">
        <title>An abundant DNA binding protein from the hyperthermophilic archaeon Sulfolobus shibatae affects DNA supercoiling in a temperature-dependent fashion.</title>
        <authorList>
            <person name="Xue H."/>
            <person name="Guo R."/>
            <person name="Wen Y."/>
            <person name="Liu D."/>
            <person name="Huang L."/>
        </authorList>
    </citation>
    <scope>FUNCTION</scope>
    <scope>BIOPHYSICOCHEMICAL PROPERTIES</scope>
    <scope>SUBUNIT</scope>
    <source>
        <strain>ATCC 51178 / DSM 5389 / JCM 8931 / NBRC 15437 / B12</strain>
    </source>
</reference>
<reference key="4">
    <citation type="journal article" date="2003" name="J. Biol. Chem.">
        <title>Two conformations of archaeal Ssh10b. The origin of its temperature-dependent interaction with DNA.</title>
        <authorList>
            <person name="Cui Q."/>
            <person name="Tong Y."/>
            <person name="Xue H."/>
            <person name="Huang L."/>
            <person name="Feng Y."/>
            <person name="Wang J."/>
        </authorList>
    </citation>
    <scope>SUBUNIT</scope>
    <scope>MUTAGENESIS OF PRO-8 AND PRO-62</scope>
</reference>
<reference key="5">
    <citation type="journal article" date="2003" name="Mol. Microbiol.">
        <title>Ssh10b, a conserved thermophilic archaeal protein, binds RNA in vivo.</title>
        <authorList>
            <person name="Guo R."/>
            <person name="Xue H."/>
            <person name="Huang L."/>
        </authorList>
    </citation>
    <scope>FUNCTION</scope>
    <scope>SUBCELLULAR LOCATION</scope>
    <scope>DEVELOPMENTAL STAGE</scope>
</reference>
<reference key="6">
    <citation type="journal article" date="2003" name="Genome Biol.">
        <title>The two faces of Alba: the evolutionary connection between proteins participating in chromatin structure and RNA metabolism.</title>
        <authorList>
            <person name="Aravind L."/>
            <person name="Iyer L.M."/>
            <person name="Anantharaman V."/>
        </authorList>
    </citation>
    <scope>REVIEW</scope>
</reference>
<reference evidence="10" key="7">
    <citation type="journal article" date="2014" name="J. Biol. Chem.">
        <title>Biochemical and structural insights into RNA binding by Ssh10b, a member of the highly conserved Sac10b protein family in Archaea.</title>
        <authorList>
            <person name="Guo L."/>
            <person name="Ding J."/>
            <person name="Guo R."/>
            <person name="Hou Y."/>
            <person name="Wang D.C."/>
            <person name="Huang L."/>
        </authorList>
    </citation>
    <scope>X-RAY CRYSTALLOGRAPHY (2.00 ANGSTROMS) IN COMPLEX WITH RNA</scope>
    <scope>FUNCTION</scope>
    <scope>SUBUNIT</scope>
    <scope>MUTAGENESIS OF LYS-16; LYS-17; MET-20; TYR-22; LEU-24; LEU-27; ARG-42; ARG-44 AND PHE-60</scope>
</reference>
<gene>
    <name evidence="3" type="primary">albA1</name>
    <name type="synonym">ssh10b</name>
    <name evidence="9" type="ORF">J5U23_02515</name>
</gene>
<dbReference type="EC" id="3.1.-.-" evidence="2"/>
<dbReference type="EMBL" id="X98420">
    <property type="protein sequence ID" value="CAA67066.1"/>
    <property type="molecule type" value="Genomic_DNA"/>
</dbReference>
<dbReference type="EMBL" id="CP077717">
    <property type="protein sequence ID" value="QXJ29642.1"/>
    <property type="molecule type" value="Genomic_DNA"/>
</dbReference>
<dbReference type="PIR" id="T29101">
    <property type="entry name" value="T29101"/>
</dbReference>
<dbReference type="RefSeq" id="WP_009992406.1">
    <property type="nucleotide sequence ID" value="NZ_CP077717.1"/>
</dbReference>
<dbReference type="PDB" id="1Y9X">
    <property type="method" value="NMR"/>
    <property type="chains" value="A/B=1-97"/>
</dbReference>
<dbReference type="PDB" id="3WBM">
    <property type="method" value="X-ray"/>
    <property type="resolution" value="2.00 A"/>
    <property type="chains" value="A/B/C/D=1-97"/>
</dbReference>
<dbReference type="PDBsum" id="1Y9X"/>
<dbReference type="PDBsum" id="3WBM"/>
<dbReference type="BMRB" id="P60848"/>
<dbReference type="SMR" id="P60848"/>
<dbReference type="GeneID" id="84061577"/>
<dbReference type="KEGG" id="sshi:J5U23_02515"/>
<dbReference type="OrthoDB" id="10360at2157"/>
<dbReference type="EvolutionaryTrace" id="P60848"/>
<dbReference type="Proteomes" id="UP000694018">
    <property type="component" value="Chromosome"/>
</dbReference>
<dbReference type="GO" id="GO:0005694">
    <property type="term" value="C:chromosome"/>
    <property type="evidence" value="ECO:0007669"/>
    <property type="project" value="UniProtKB-SubCell"/>
</dbReference>
<dbReference type="GO" id="GO:0005737">
    <property type="term" value="C:cytoplasm"/>
    <property type="evidence" value="ECO:0007669"/>
    <property type="project" value="UniProtKB-SubCell"/>
</dbReference>
<dbReference type="GO" id="GO:0003690">
    <property type="term" value="F:double-stranded DNA binding"/>
    <property type="evidence" value="ECO:0007669"/>
    <property type="project" value="UniProtKB-UniRule"/>
</dbReference>
<dbReference type="GO" id="GO:0004518">
    <property type="term" value="F:nuclease activity"/>
    <property type="evidence" value="ECO:0007669"/>
    <property type="project" value="UniProtKB-KW"/>
</dbReference>
<dbReference type="GO" id="GO:0003723">
    <property type="term" value="F:RNA binding"/>
    <property type="evidence" value="ECO:0007669"/>
    <property type="project" value="UniProtKB-KW"/>
</dbReference>
<dbReference type="GO" id="GO:0030261">
    <property type="term" value="P:chromosome condensation"/>
    <property type="evidence" value="ECO:0007669"/>
    <property type="project" value="UniProtKB-KW"/>
</dbReference>
<dbReference type="FunFam" id="3.30.110.20:FF:000008">
    <property type="entry name" value="DNA/RNA-binding protein Alba 1"/>
    <property type="match status" value="1"/>
</dbReference>
<dbReference type="Gene3D" id="3.30.110.20">
    <property type="entry name" value="Alba-like domain"/>
    <property type="match status" value="1"/>
</dbReference>
<dbReference type="HAMAP" id="MF_01122">
    <property type="entry name" value="AlbA"/>
    <property type="match status" value="1"/>
</dbReference>
<dbReference type="InterPro" id="IPR036882">
    <property type="entry name" value="Alba-like_dom_sf"/>
</dbReference>
<dbReference type="InterPro" id="IPR013795">
    <property type="entry name" value="DNA/RNA-bd_Alba"/>
</dbReference>
<dbReference type="InterPro" id="IPR002775">
    <property type="entry name" value="DNA/RNA-bd_Alba-like"/>
</dbReference>
<dbReference type="NCBIfam" id="TIGR00285">
    <property type="entry name" value="DNA-binding protein Alba"/>
    <property type="match status" value="1"/>
</dbReference>
<dbReference type="NCBIfam" id="NF003088">
    <property type="entry name" value="PRK04015.1"/>
    <property type="match status" value="1"/>
</dbReference>
<dbReference type="Pfam" id="PF01918">
    <property type="entry name" value="Alba"/>
    <property type="match status" value="1"/>
</dbReference>
<dbReference type="PIRSF" id="PIRSF028732">
    <property type="entry name" value="Alba"/>
    <property type="match status" value="1"/>
</dbReference>
<dbReference type="SUPFAM" id="SSF82704">
    <property type="entry name" value="AlbA-like"/>
    <property type="match status" value="1"/>
</dbReference>
<name>ALBA1_SACSH</name>
<accession>P60848</accession>
<accession>A0A8F5GUQ9</accession>
<accession>P74761</accession>
<accession>Q97ZF6</accession>
<proteinExistence type="evidence at protein level"/>